<keyword id="KW-0414">Isoprene biosynthesis</keyword>
<keyword id="KW-0460">Magnesium</keyword>
<keyword id="KW-0479">Metal-binding</keyword>
<keyword id="KW-0784">Thiamine biosynthesis</keyword>
<keyword id="KW-0786">Thiamine pyrophosphate</keyword>
<keyword id="KW-0808">Transferase</keyword>
<protein>
    <recommendedName>
        <fullName evidence="1">1-deoxy-D-xylulose-5-phosphate synthase</fullName>
        <ecNumber evidence="1">2.2.1.7</ecNumber>
    </recommendedName>
    <alternativeName>
        <fullName evidence="1">1-deoxyxylulose-5-phosphate synthase</fullName>
        <shortName evidence="1">DXP synthase</shortName>
        <shortName evidence="1">DXPS</shortName>
    </alternativeName>
</protein>
<feature type="chain" id="PRO_0000256462" description="1-deoxy-D-xylulose-5-phosphate synthase">
    <location>
        <begin position="1"/>
        <end position="630"/>
    </location>
</feature>
<feature type="binding site" evidence="1">
    <location>
        <position position="87"/>
    </location>
    <ligand>
        <name>thiamine diphosphate</name>
        <dbReference type="ChEBI" id="CHEBI:58937"/>
    </ligand>
</feature>
<feature type="binding site" evidence="1">
    <location>
        <begin position="128"/>
        <end position="130"/>
    </location>
    <ligand>
        <name>thiamine diphosphate</name>
        <dbReference type="ChEBI" id="CHEBI:58937"/>
    </ligand>
</feature>
<feature type="binding site" evidence="1">
    <location>
        <position position="159"/>
    </location>
    <ligand>
        <name>Mg(2+)</name>
        <dbReference type="ChEBI" id="CHEBI:18420"/>
    </ligand>
</feature>
<feature type="binding site" evidence="1">
    <location>
        <begin position="160"/>
        <end position="161"/>
    </location>
    <ligand>
        <name>thiamine diphosphate</name>
        <dbReference type="ChEBI" id="CHEBI:58937"/>
    </ligand>
</feature>
<feature type="binding site" evidence="1">
    <location>
        <position position="188"/>
    </location>
    <ligand>
        <name>Mg(2+)</name>
        <dbReference type="ChEBI" id="CHEBI:18420"/>
    </ligand>
</feature>
<feature type="binding site" evidence="1">
    <location>
        <position position="188"/>
    </location>
    <ligand>
        <name>thiamine diphosphate</name>
        <dbReference type="ChEBI" id="CHEBI:58937"/>
    </ligand>
</feature>
<feature type="binding site" evidence="1">
    <location>
        <position position="295"/>
    </location>
    <ligand>
        <name>thiamine diphosphate</name>
        <dbReference type="ChEBI" id="CHEBI:58937"/>
    </ligand>
</feature>
<feature type="binding site" evidence="1">
    <location>
        <position position="377"/>
    </location>
    <ligand>
        <name>thiamine diphosphate</name>
        <dbReference type="ChEBI" id="CHEBI:58937"/>
    </ligand>
</feature>
<reference key="1">
    <citation type="journal article" date="2005" name="Proc. Natl. Acad. Sci. U.S.A.">
        <title>Comparison of the complete genome sequences of Pseudomonas syringae pv. syringae B728a and pv. tomato DC3000.</title>
        <authorList>
            <person name="Feil H."/>
            <person name="Feil W.S."/>
            <person name="Chain P."/>
            <person name="Larimer F."/>
            <person name="Dibartolo G."/>
            <person name="Copeland A."/>
            <person name="Lykidis A."/>
            <person name="Trong S."/>
            <person name="Nolan M."/>
            <person name="Goltsman E."/>
            <person name="Thiel J."/>
            <person name="Malfatti S."/>
            <person name="Loper J.E."/>
            <person name="Lapidus A."/>
            <person name="Detter J.C."/>
            <person name="Land M."/>
            <person name="Richardson P.M."/>
            <person name="Kyrpides N.C."/>
            <person name="Ivanova N."/>
            <person name="Lindow S.E."/>
        </authorList>
    </citation>
    <scope>NUCLEOTIDE SEQUENCE [LARGE SCALE GENOMIC DNA]</scope>
    <source>
        <strain>B728a</strain>
    </source>
</reference>
<organism>
    <name type="scientific">Pseudomonas syringae pv. syringae (strain B728a)</name>
    <dbReference type="NCBI Taxonomy" id="205918"/>
    <lineage>
        <taxon>Bacteria</taxon>
        <taxon>Pseudomonadati</taxon>
        <taxon>Pseudomonadota</taxon>
        <taxon>Gammaproteobacteria</taxon>
        <taxon>Pseudomonadales</taxon>
        <taxon>Pseudomonadaceae</taxon>
        <taxon>Pseudomonas</taxon>
        <taxon>Pseudomonas syringae</taxon>
    </lineage>
</organism>
<evidence type="ECO:0000255" key="1">
    <source>
        <dbReference type="HAMAP-Rule" id="MF_00315"/>
    </source>
</evidence>
<proteinExistence type="inferred from homology"/>
<dbReference type="EC" id="2.2.1.7" evidence="1"/>
<dbReference type="EMBL" id="CP000075">
    <property type="protein sequence ID" value="AAY35674.1"/>
    <property type="molecule type" value="Genomic_DNA"/>
</dbReference>
<dbReference type="RefSeq" id="WP_011266507.1">
    <property type="nucleotide sequence ID" value="NC_007005.1"/>
</dbReference>
<dbReference type="RefSeq" id="YP_233712.1">
    <property type="nucleotide sequence ID" value="NC_007005.1"/>
</dbReference>
<dbReference type="SMR" id="Q4ZYU8"/>
<dbReference type="STRING" id="205918.Psyr_0604"/>
<dbReference type="KEGG" id="psb:Psyr_0604"/>
<dbReference type="PATRIC" id="fig|205918.7.peg.627"/>
<dbReference type="eggNOG" id="COG1154">
    <property type="taxonomic scope" value="Bacteria"/>
</dbReference>
<dbReference type="HOGENOM" id="CLU_009227_1_4_6"/>
<dbReference type="OrthoDB" id="9803371at2"/>
<dbReference type="UniPathway" id="UPA00064">
    <property type="reaction ID" value="UER00091"/>
</dbReference>
<dbReference type="Proteomes" id="UP000000426">
    <property type="component" value="Chromosome"/>
</dbReference>
<dbReference type="GO" id="GO:0005829">
    <property type="term" value="C:cytosol"/>
    <property type="evidence" value="ECO:0007669"/>
    <property type="project" value="TreeGrafter"/>
</dbReference>
<dbReference type="GO" id="GO:0008661">
    <property type="term" value="F:1-deoxy-D-xylulose-5-phosphate synthase activity"/>
    <property type="evidence" value="ECO:0007669"/>
    <property type="project" value="UniProtKB-UniRule"/>
</dbReference>
<dbReference type="GO" id="GO:0000287">
    <property type="term" value="F:magnesium ion binding"/>
    <property type="evidence" value="ECO:0007669"/>
    <property type="project" value="UniProtKB-UniRule"/>
</dbReference>
<dbReference type="GO" id="GO:0030976">
    <property type="term" value="F:thiamine pyrophosphate binding"/>
    <property type="evidence" value="ECO:0007669"/>
    <property type="project" value="UniProtKB-UniRule"/>
</dbReference>
<dbReference type="GO" id="GO:0052865">
    <property type="term" value="P:1-deoxy-D-xylulose 5-phosphate biosynthetic process"/>
    <property type="evidence" value="ECO:0007669"/>
    <property type="project" value="UniProtKB-UniPathway"/>
</dbReference>
<dbReference type="GO" id="GO:0019288">
    <property type="term" value="P:isopentenyl diphosphate biosynthetic process, methylerythritol 4-phosphate pathway"/>
    <property type="evidence" value="ECO:0007669"/>
    <property type="project" value="TreeGrafter"/>
</dbReference>
<dbReference type="GO" id="GO:0016114">
    <property type="term" value="P:terpenoid biosynthetic process"/>
    <property type="evidence" value="ECO:0007669"/>
    <property type="project" value="UniProtKB-UniRule"/>
</dbReference>
<dbReference type="GO" id="GO:0009228">
    <property type="term" value="P:thiamine biosynthetic process"/>
    <property type="evidence" value="ECO:0007669"/>
    <property type="project" value="UniProtKB-UniRule"/>
</dbReference>
<dbReference type="CDD" id="cd02007">
    <property type="entry name" value="TPP_DXS"/>
    <property type="match status" value="1"/>
</dbReference>
<dbReference type="CDD" id="cd07033">
    <property type="entry name" value="TPP_PYR_DXS_TK_like"/>
    <property type="match status" value="1"/>
</dbReference>
<dbReference type="FunFam" id="3.40.50.920:FF:000002">
    <property type="entry name" value="1-deoxy-D-xylulose-5-phosphate synthase"/>
    <property type="match status" value="1"/>
</dbReference>
<dbReference type="FunFam" id="3.40.50.970:FF:000005">
    <property type="entry name" value="1-deoxy-D-xylulose-5-phosphate synthase"/>
    <property type="match status" value="1"/>
</dbReference>
<dbReference type="Gene3D" id="3.40.50.920">
    <property type="match status" value="1"/>
</dbReference>
<dbReference type="Gene3D" id="3.40.50.970">
    <property type="match status" value="2"/>
</dbReference>
<dbReference type="HAMAP" id="MF_00315">
    <property type="entry name" value="DXP_synth"/>
    <property type="match status" value="1"/>
</dbReference>
<dbReference type="InterPro" id="IPR005477">
    <property type="entry name" value="Dxylulose-5-P_synthase"/>
</dbReference>
<dbReference type="InterPro" id="IPR029061">
    <property type="entry name" value="THDP-binding"/>
</dbReference>
<dbReference type="InterPro" id="IPR009014">
    <property type="entry name" value="Transketo_C/PFOR_II"/>
</dbReference>
<dbReference type="InterPro" id="IPR005475">
    <property type="entry name" value="Transketolase-like_Pyr-bd"/>
</dbReference>
<dbReference type="InterPro" id="IPR020826">
    <property type="entry name" value="Transketolase_BS"/>
</dbReference>
<dbReference type="InterPro" id="IPR033248">
    <property type="entry name" value="Transketolase_C"/>
</dbReference>
<dbReference type="NCBIfam" id="TIGR00204">
    <property type="entry name" value="dxs"/>
    <property type="match status" value="1"/>
</dbReference>
<dbReference type="NCBIfam" id="NF003933">
    <property type="entry name" value="PRK05444.2-2"/>
    <property type="match status" value="1"/>
</dbReference>
<dbReference type="PANTHER" id="PTHR43322">
    <property type="entry name" value="1-D-DEOXYXYLULOSE 5-PHOSPHATE SYNTHASE-RELATED"/>
    <property type="match status" value="1"/>
</dbReference>
<dbReference type="PANTHER" id="PTHR43322:SF5">
    <property type="entry name" value="1-DEOXY-D-XYLULOSE-5-PHOSPHATE SYNTHASE, CHLOROPLASTIC"/>
    <property type="match status" value="1"/>
</dbReference>
<dbReference type="Pfam" id="PF13292">
    <property type="entry name" value="DXP_synthase_N"/>
    <property type="match status" value="1"/>
</dbReference>
<dbReference type="Pfam" id="PF02779">
    <property type="entry name" value="Transket_pyr"/>
    <property type="match status" value="1"/>
</dbReference>
<dbReference type="Pfam" id="PF02780">
    <property type="entry name" value="Transketolase_C"/>
    <property type="match status" value="1"/>
</dbReference>
<dbReference type="SMART" id="SM00861">
    <property type="entry name" value="Transket_pyr"/>
    <property type="match status" value="1"/>
</dbReference>
<dbReference type="SUPFAM" id="SSF52518">
    <property type="entry name" value="Thiamin diphosphate-binding fold (THDP-binding)"/>
    <property type="match status" value="2"/>
</dbReference>
<dbReference type="SUPFAM" id="SSF52922">
    <property type="entry name" value="TK C-terminal domain-like"/>
    <property type="match status" value="1"/>
</dbReference>
<dbReference type="PROSITE" id="PS00802">
    <property type="entry name" value="TRANSKETOLASE_2"/>
    <property type="match status" value="1"/>
</dbReference>
<comment type="function">
    <text evidence="1">Catalyzes the acyloin condensation reaction between C atoms 2 and 3 of pyruvate and glyceraldehyde 3-phosphate to yield 1-deoxy-D-xylulose-5-phosphate (DXP).</text>
</comment>
<comment type="catalytic activity">
    <reaction evidence="1">
        <text>D-glyceraldehyde 3-phosphate + pyruvate + H(+) = 1-deoxy-D-xylulose 5-phosphate + CO2</text>
        <dbReference type="Rhea" id="RHEA:12605"/>
        <dbReference type="ChEBI" id="CHEBI:15361"/>
        <dbReference type="ChEBI" id="CHEBI:15378"/>
        <dbReference type="ChEBI" id="CHEBI:16526"/>
        <dbReference type="ChEBI" id="CHEBI:57792"/>
        <dbReference type="ChEBI" id="CHEBI:59776"/>
        <dbReference type="EC" id="2.2.1.7"/>
    </reaction>
</comment>
<comment type="cofactor">
    <cofactor evidence="1">
        <name>Mg(2+)</name>
        <dbReference type="ChEBI" id="CHEBI:18420"/>
    </cofactor>
    <text evidence="1">Binds 1 Mg(2+) ion per subunit.</text>
</comment>
<comment type="cofactor">
    <cofactor evidence="1">
        <name>thiamine diphosphate</name>
        <dbReference type="ChEBI" id="CHEBI:58937"/>
    </cofactor>
    <text evidence="1">Binds 1 thiamine pyrophosphate per subunit.</text>
</comment>
<comment type="pathway">
    <text evidence="1">Metabolic intermediate biosynthesis; 1-deoxy-D-xylulose 5-phosphate biosynthesis; 1-deoxy-D-xylulose 5-phosphate from D-glyceraldehyde 3-phosphate and pyruvate: step 1/1.</text>
</comment>
<comment type="subunit">
    <text evidence="1">Homodimer.</text>
</comment>
<comment type="similarity">
    <text evidence="1">Belongs to the transketolase family. DXPS subfamily.</text>
</comment>
<name>DXS_PSEU2</name>
<accession>Q4ZYU8</accession>
<sequence>MPTTFKEIPRERPVTPLLDRADTPHGLRRLGEAELETLADELRLELLYSVGQTGGHFGAGLGVIELTIALHYVFDTPDDRLVWDVGHQAYPHKILTGRRARMSTLRQKEGVAAFPRRSESEYDTFGVGHSSTSISAALGMAIASRLQGSERKSIAVIGDGALTAGMAFEALNHAPEVAADMLVILNDNDMSISRNVGGLSNYLAKILSSRTYSSMREGSKKVLSRLPGAWEIARRTEEYAKGMLVPGTLFEELGWNYIGPIDGHDLPTLIATLRNMRDLKGPQFLHVVTKKGKGFAPAEVDPIGYHAITKLEPLNAPAAQKKISAPKYSGVFGQWICDMADADARLVGITPAMKEGSDLVAFSERFPERYFDVAIAEQHAVTLAAGMACEGSKPVVAIYSTFLQRGYDQLIHDVAVQNLDVLFAIDRAGLVGEDGPTHAGSFDLSYLRCIPGMLVMTPSDENELRKLLSTGYLHTGPAAVRYPRGTGPNAVIEASLDPLEIGKGVVRRQGQGVAILAFGVQLAEALVVAEKLDATVIDMRFVKPLDEALVSEAAANHELLVTLEENAVMGGAGAAVSEFLARANILKSVLHLGLPDVYVEHAKPAQMLTECGLDAQGIEAAINERLALIG</sequence>
<gene>
    <name evidence="1" type="primary">dxs</name>
    <name type="ordered locus">Psyr_0604</name>
</gene>